<organism>
    <name type="scientific">Burkholderia cenocepacia (strain ATCC BAA-245 / DSM 16553 / LMG 16656 / NCTC 13227 / J2315 / CF5610)</name>
    <name type="common">Burkholderia cepacia (strain J2315)</name>
    <dbReference type="NCBI Taxonomy" id="216591"/>
    <lineage>
        <taxon>Bacteria</taxon>
        <taxon>Pseudomonadati</taxon>
        <taxon>Pseudomonadota</taxon>
        <taxon>Betaproteobacteria</taxon>
        <taxon>Burkholderiales</taxon>
        <taxon>Burkholderiaceae</taxon>
        <taxon>Burkholderia</taxon>
        <taxon>Burkholderia cepacia complex</taxon>
    </lineage>
</organism>
<name>RPPH_BURCJ</name>
<comment type="function">
    <text evidence="1">Accelerates the degradation of transcripts by removing pyrophosphate from the 5'-end of triphosphorylated RNA, leading to a more labile monophosphorylated state that can stimulate subsequent ribonuclease cleavage.</text>
</comment>
<comment type="cofactor">
    <cofactor evidence="1">
        <name>a divalent metal cation</name>
        <dbReference type="ChEBI" id="CHEBI:60240"/>
    </cofactor>
</comment>
<comment type="similarity">
    <text evidence="1">Belongs to the Nudix hydrolase family. RppH subfamily.</text>
</comment>
<feature type="chain" id="PRO_1000115269" description="RNA pyrophosphohydrolase">
    <location>
        <begin position="1"/>
        <end position="214"/>
    </location>
</feature>
<feature type="domain" description="Nudix hydrolase" evidence="1">
    <location>
        <begin position="6"/>
        <end position="149"/>
    </location>
</feature>
<feature type="short sequence motif" description="Nudix box">
    <location>
        <begin position="38"/>
        <end position="59"/>
    </location>
</feature>
<reference key="1">
    <citation type="journal article" date="2009" name="J. Bacteriol.">
        <title>The genome of Burkholderia cenocepacia J2315, an epidemic pathogen of cystic fibrosis patients.</title>
        <authorList>
            <person name="Holden M.T."/>
            <person name="Seth-Smith H.M."/>
            <person name="Crossman L.C."/>
            <person name="Sebaihia M."/>
            <person name="Bentley S.D."/>
            <person name="Cerdeno-Tarraga A.M."/>
            <person name="Thomson N.R."/>
            <person name="Bason N."/>
            <person name="Quail M.A."/>
            <person name="Sharp S."/>
            <person name="Cherevach I."/>
            <person name="Churcher C."/>
            <person name="Goodhead I."/>
            <person name="Hauser H."/>
            <person name="Holroyd N."/>
            <person name="Mungall K."/>
            <person name="Scott P."/>
            <person name="Walker D."/>
            <person name="White B."/>
            <person name="Rose H."/>
            <person name="Iversen P."/>
            <person name="Mil-Homens D."/>
            <person name="Rocha E.P."/>
            <person name="Fialho A.M."/>
            <person name="Baldwin A."/>
            <person name="Dowson C."/>
            <person name="Barrell B.G."/>
            <person name="Govan J.R."/>
            <person name="Vandamme P."/>
            <person name="Hart C.A."/>
            <person name="Mahenthiralingam E."/>
            <person name="Parkhill J."/>
        </authorList>
    </citation>
    <scope>NUCLEOTIDE SEQUENCE [LARGE SCALE GENOMIC DNA]</scope>
    <source>
        <strain>ATCC BAA-245 / DSM 16553 / LMG 16656 / NCTC 13227 / J2315 / CF5610</strain>
    </source>
</reference>
<sequence length="214" mass="25298">MLDREGFRPNVGIILLNARNEVFWGKRLREHSWQFPQGGIKYGETPMQAMYRELHEETGLHPEHVKIIGRTRDWLRYEVPDKFIKREVRGHYRGQKQIWFLLRMVGRDCDICLRATDHPEFDAWRWNEYWVPLDAVIEFKRDVYQLALTELSRFLRRPAQRAEKPRGPRVSRYPRVIGAQAQTLTIVDASVVCSEIEVEASTLDEMPPRVIVGK</sequence>
<protein>
    <recommendedName>
        <fullName evidence="1">RNA pyrophosphohydrolase</fullName>
        <ecNumber evidence="1">3.6.1.-</ecNumber>
    </recommendedName>
    <alternativeName>
        <fullName evidence="1">(Di)nucleoside polyphosphate hydrolase</fullName>
    </alternativeName>
</protein>
<proteinExistence type="inferred from homology"/>
<keyword id="KW-0378">Hydrolase</keyword>
<evidence type="ECO:0000255" key="1">
    <source>
        <dbReference type="HAMAP-Rule" id="MF_00298"/>
    </source>
</evidence>
<accession>B4E5W7</accession>
<gene>
    <name evidence="1" type="primary">rppH</name>
    <name evidence="1" type="synonym">nudH</name>
    <name type="ordered locus">BceJ2315_33750</name>
    <name type="ORF">BCAL3437</name>
</gene>
<dbReference type="EC" id="3.6.1.-" evidence="1"/>
<dbReference type="EMBL" id="AM747720">
    <property type="protein sequence ID" value="CAR53760.1"/>
    <property type="molecule type" value="Genomic_DNA"/>
</dbReference>
<dbReference type="RefSeq" id="WP_006496762.1">
    <property type="nucleotide sequence ID" value="NC_011000.1"/>
</dbReference>
<dbReference type="SMR" id="B4E5W7"/>
<dbReference type="KEGG" id="bcj:BCAL3437"/>
<dbReference type="eggNOG" id="COG0494">
    <property type="taxonomic scope" value="Bacteria"/>
</dbReference>
<dbReference type="HOGENOM" id="CLU_087195_0_1_4"/>
<dbReference type="BioCyc" id="BCEN216591:G1G1V-3821-MONOMER"/>
<dbReference type="Proteomes" id="UP000001035">
    <property type="component" value="Chromosome 1"/>
</dbReference>
<dbReference type="GO" id="GO:0016462">
    <property type="term" value="F:pyrophosphatase activity"/>
    <property type="evidence" value="ECO:0007669"/>
    <property type="project" value="UniProtKB-ARBA"/>
</dbReference>
<dbReference type="CDD" id="cd03671">
    <property type="entry name" value="NUDIX_Ap4A_hydrolase_plant_like"/>
    <property type="match status" value="1"/>
</dbReference>
<dbReference type="Gene3D" id="3.90.79.10">
    <property type="entry name" value="Nucleoside Triphosphate Pyrophosphohydrolase"/>
    <property type="match status" value="1"/>
</dbReference>
<dbReference type="HAMAP" id="MF_00298">
    <property type="entry name" value="Nudix_RppH"/>
    <property type="match status" value="1"/>
</dbReference>
<dbReference type="InterPro" id="IPR020476">
    <property type="entry name" value="Nudix_hydrolase"/>
</dbReference>
<dbReference type="InterPro" id="IPR015797">
    <property type="entry name" value="NUDIX_hydrolase-like_dom_sf"/>
</dbReference>
<dbReference type="InterPro" id="IPR020084">
    <property type="entry name" value="NUDIX_hydrolase_CS"/>
</dbReference>
<dbReference type="InterPro" id="IPR000086">
    <property type="entry name" value="NUDIX_hydrolase_dom"/>
</dbReference>
<dbReference type="InterPro" id="IPR022927">
    <property type="entry name" value="RppH"/>
</dbReference>
<dbReference type="NCBIfam" id="NF001935">
    <property type="entry name" value="PRK00714.1-2"/>
    <property type="match status" value="1"/>
</dbReference>
<dbReference type="NCBIfam" id="NF001937">
    <property type="entry name" value="PRK00714.1-4"/>
    <property type="match status" value="1"/>
</dbReference>
<dbReference type="NCBIfam" id="NF001938">
    <property type="entry name" value="PRK00714.1-5"/>
    <property type="match status" value="1"/>
</dbReference>
<dbReference type="PANTHER" id="PTHR43736">
    <property type="entry name" value="ADP-RIBOSE PYROPHOSPHATASE"/>
    <property type="match status" value="1"/>
</dbReference>
<dbReference type="PANTHER" id="PTHR43736:SF1">
    <property type="entry name" value="DIHYDRONEOPTERIN TRIPHOSPHATE DIPHOSPHATASE"/>
    <property type="match status" value="1"/>
</dbReference>
<dbReference type="Pfam" id="PF00293">
    <property type="entry name" value="NUDIX"/>
    <property type="match status" value="1"/>
</dbReference>
<dbReference type="PRINTS" id="PR00502">
    <property type="entry name" value="NUDIXFAMILY"/>
</dbReference>
<dbReference type="SUPFAM" id="SSF55811">
    <property type="entry name" value="Nudix"/>
    <property type="match status" value="1"/>
</dbReference>
<dbReference type="PROSITE" id="PS51462">
    <property type="entry name" value="NUDIX"/>
    <property type="match status" value="1"/>
</dbReference>
<dbReference type="PROSITE" id="PS00893">
    <property type="entry name" value="NUDIX_BOX"/>
    <property type="match status" value="1"/>
</dbReference>